<protein>
    <recommendedName>
        <fullName>Exocyst complex component 5</fullName>
    </recommendedName>
    <alternativeName>
        <fullName>71 kDa component of rsec6/8 secretory complex</fullName>
    </alternativeName>
    <alternativeName>
        <fullName>Exocyst complex component Sec10</fullName>
    </alternativeName>
    <alternativeName>
        <fullName>p71</fullName>
    </alternativeName>
</protein>
<gene>
    <name type="primary">Exoc5</name>
    <name type="synonym">Sec10l1</name>
</gene>
<accession>P97878</accession>
<accession>A1A5N5</accession>
<proteinExistence type="evidence at protein level"/>
<feature type="initiator methionine" description="Removed" evidence="1">
    <location>
        <position position="1"/>
    </location>
</feature>
<feature type="chain" id="PRO_0000118945" description="Exocyst complex component 5">
    <location>
        <begin position="2"/>
        <end position="708"/>
    </location>
</feature>
<feature type="coiled-coil region" evidence="3">
    <location>
        <begin position="40"/>
        <end position="101"/>
    </location>
</feature>
<feature type="modified residue" description="N-acetylalanine" evidence="1">
    <location>
        <position position="2"/>
    </location>
</feature>
<feature type="modified residue" description="Phosphothreonine" evidence="1">
    <location>
        <position position="122"/>
    </location>
</feature>
<feature type="modified residue" description="Phosphothreonine" evidence="7">
    <location>
        <position position="395"/>
    </location>
</feature>
<feature type="modified residue" description="Phosphothreonine" evidence="7">
    <location>
        <position position="405"/>
    </location>
</feature>
<feature type="modified residue" description="Phosphoserine" evidence="7">
    <location>
        <position position="412"/>
    </location>
</feature>
<keyword id="KW-0007">Acetylation</keyword>
<keyword id="KW-0175">Coiled coil</keyword>
<keyword id="KW-0963">Cytoplasm</keyword>
<keyword id="KW-0903">Direct protein sequencing</keyword>
<keyword id="KW-0268">Exocytosis</keyword>
<keyword id="KW-0597">Phosphoprotein</keyword>
<keyword id="KW-0653">Protein transport</keyword>
<keyword id="KW-1185">Reference proteome</keyword>
<keyword id="KW-0813">Transport</keyword>
<reference key="1">
    <citation type="journal article" date="1997" name="Gene">
        <title>Characterization of a cDNA encoding a subunit of the rat brain rsec6/8 complex.</title>
        <authorList>
            <person name="Hazuka C.D."/>
            <person name="Hsu S.C."/>
            <person name="Scheller R.H."/>
        </authorList>
    </citation>
    <scope>NUCLEOTIDE SEQUENCE [MRNA]</scope>
    <scope>PARTIAL PROTEIN SEQUENCE</scope>
    <scope>TISSUE SPECIFICITY</scope>
    <source>
        <tissue>Brain</tissue>
    </source>
</reference>
<reference key="2">
    <citation type="journal article" date="2004" name="Genome Res.">
        <title>The status, quality, and expansion of the NIH full-length cDNA project: the Mammalian Gene Collection (MGC).</title>
        <authorList>
            <consortium name="The MGC Project Team"/>
        </authorList>
    </citation>
    <scope>NUCLEOTIDE SEQUENCE [LARGE SCALE MRNA]</scope>
    <source>
        <tissue>Brain</tissue>
    </source>
</reference>
<reference key="3">
    <citation type="journal article" date="1997" name="Proc. Natl. Acad. Sci. U.S.A.">
        <title>Subunit structure of the mammalian exocyst complex.</title>
        <authorList>
            <person name="Kee Y."/>
            <person name="Yoo J.-S."/>
            <person name="Hazuka C.D."/>
            <person name="Peterson K.E."/>
            <person name="Hsu S.-C."/>
            <person name="Scheller R.H."/>
        </authorList>
    </citation>
    <scope>IDENTIFICATION IN EXOCYST COMPLEX</scope>
    <source>
        <tissue>Brain</tissue>
    </source>
</reference>
<reference key="4">
    <citation type="journal article" date="2006" name="Proc. Natl. Acad. Sci. U.S.A.">
        <title>Quantitative phosphoproteomics of vasopressin-sensitive renal cells: regulation of aquaporin-2 phosphorylation at two sites.</title>
        <authorList>
            <person name="Hoffert J.D."/>
            <person name="Pisitkun T."/>
            <person name="Wang G."/>
            <person name="Shen R.-F."/>
            <person name="Knepper M.A."/>
        </authorList>
    </citation>
    <scope>PHOSPHORYLATION [LARGE SCALE ANALYSIS] AT THR-395; THR-405 AND SER-412</scope>
    <scope>IDENTIFICATION BY MASS SPECTROMETRY [LARGE SCALE ANALYSIS]</scope>
</reference>
<dbReference type="EMBL" id="U79417">
    <property type="protein sequence ID" value="AAC53096.1"/>
    <property type="molecule type" value="mRNA"/>
</dbReference>
<dbReference type="EMBL" id="BC128739">
    <property type="protein sequence ID" value="AAI28740.1"/>
    <property type="molecule type" value="mRNA"/>
</dbReference>
<dbReference type="PIR" id="JC6329">
    <property type="entry name" value="JC6329"/>
</dbReference>
<dbReference type="RefSeq" id="NP_071540.1">
    <property type="nucleotide sequence ID" value="NM_022204.3"/>
</dbReference>
<dbReference type="SMR" id="P97878"/>
<dbReference type="CORUM" id="P97878"/>
<dbReference type="FunCoup" id="P97878">
    <property type="interactions" value="4860"/>
</dbReference>
<dbReference type="STRING" id="10116.ENSRNOP00000062799"/>
<dbReference type="iPTMnet" id="P97878"/>
<dbReference type="PhosphoSitePlus" id="P97878"/>
<dbReference type="jPOST" id="P97878"/>
<dbReference type="PaxDb" id="10116-ENSRNOP00000062799"/>
<dbReference type="Ensembl" id="ENSRNOT00000067735.4">
    <property type="protein sequence ID" value="ENSRNOP00000062799.2"/>
    <property type="gene ID" value="ENSRNOG00000013804.7"/>
</dbReference>
<dbReference type="GeneID" id="60627"/>
<dbReference type="KEGG" id="rno:60627"/>
<dbReference type="UCSC" id="RGD:708408">
    <property type="organism name" value="rat"/>
</dbReference>
<dbReference type="AGR" id="RGD:708408"/>
<dbReference type="CTD" id="10640"/>
<dbReference type="RGD" id="708408">
    <property type="gene designation" value="Exoc5"/>
</dbReference>
<dbReference type="eggNOG" id="KOG3745">
    <property type="taxonomic scope" value="Eukaryota"/>
</dbReference>
<dbReference type="GeneTree" id="ENSGT00390000012837"/>
<dbReference type="HOGENOM" id="CLU_020771_1_0_1"/>
<dbReference type="InParanoid" id="P97878"/>
<dbReference type="OMA" id="PLCKHHY"/>
<dbReference type="OrthoDB" id="125856at2759"/>
<dbReference type="Reactome" id="R-RNO-264876">
    <property type="pathway name" value="Insulin processing"/>
</dbReference>
<dbReference type="Reactome" id="R-RNO-5620916">
    <property type="pathway name" value="VxPx cargo-targeting to cilium"/>
</dbReference>
<dbReference type="PRO" id="PR:P97878"/>
<dbReference type="Proteomes" id="UP000002494">
    <property type="component" value="Chromosome 15"/>
</dbReference>
<dbReference type="Bgee" id="ENSRNOG00000013804">
    <property type="expression patterns" value="Expressed in ileum and 20 other cell types or tissues"/>
</dbReference>
<dbReference type="GO" id="GO:0000145">
    <property type="term" value="C:exocyst"/>
    <property type="evidence" value="ECO:0000318"/>
    <property type="project" value="GO_Central"/>
</dbReference>
<dbReference type="GO" id="GO:0030496">
    <property type="term" value="C:midbody"/>
    <property type="evidence" value="ECO:0007669"/>
    <property type="project" value="UniProtKB-SubCell"/>
</dbReference>
<dbReference type="GO" id="GO:0031267">
    <property type="term" value="F:small GTPase binding"/>
    <property type="evidence" value="ECO:0000266"/>
    <property type="project" value="RGD"/>
</dbReference>
<dbReference type="GO" id="GO:1904019">
    <property type="term" value="P:epithelial cell apoptotic process"/>
    <property type="evidence" value="ECO:0000266"/>
    <property type="project" value="RGD"/>
</dbReference>
<dbReference type="GO" id="GO:0001736">
    <property type="term" value="P:establishment of planar polarity"/>
    <property type="evidence" value="ECO:0000266"/>
    <property type="project" value="RGD"/>
</dbReference>
<dbReference type="GO" id="GO:0006887">
    <property type="term" value="P:exocytosis"/>
    <property type="evidence" value="ECO:0000318"/>
    <property type="project" value="GO_Central"/>
</dbReference>
<dbReference type="GO" id="GO:0006893">
    <property type="term" value="P:Golgi to plasma membrane transport"/>
    <property type="evidence" value="ECO:0000318"/>
    <property type="project" value="GO_Central"/>
</dbReference>
<dbReference type="GO" id="GO:0043066">
    <property type="term" value="P:negative regulation of apoptotic process"/>
    <property type="evidence" value="ECO:0000266"/>
    <property type="project" value="RGD"/>
</dbReference>
<dbReference type="GO" id="GO:1905515">
    <property type="term" value="P:non-motile cilium assembly"/>
    <property type="evidence" value="ECO:0000266"/>
    <property type="project" value="RGD"/>
</dbReference>
<dbReference type="GO" id="GO:0072659">
    <property type="term" value="P:protein localization to plasma membrane"/>
    <property type="evidence" value="ECO:0000266"/>
    <property type="project" value="RGD"/>
</dbReference>
<dbReference type="GO" id="GO:0015031">
    <property type="term" value="P:protein transport"/>
    <property type="evidence" value="ECO:0007669"/>
    <property type="project" value="UniProtKB-KW"/>
</dbReference>
<dbReference type="InterPro" id="IPR009976">
    <property type="entry name" value="Sec10-like"/>
</dbReference>
<dbReference type="InterPro" id="IPR048627">
    <property type="entry name" value="Sec10_HB"/>
</dbReference>
<dbReference type="InterPro" id="IPR048625">
    <property type="entry name" value="Sec10_N"/>
</dbReference>
<dbReference type="PANTHER" id="PTHR12100:SF0">
    <property type="entry name" value="EXOCYST COMPLEX COMPONENT 5"/>
    <property type="match status" value="1"/>
</dbReference>
<dbReference type="PANTHER" id="PTHR12100">
    <property type="entry name" value="SEC10"/>
    <property type="match status" value="1"/>
</dbReference>
<dbReference type="Pfam" id="PF07393">
    <property type="entry name" value="Sec10_HB"/>
    <property type="match status" value="1"/>
</dbReference>
<dbReference type="Pfam" id="PF20667">
    <property type="entry name" value="Sec10_N"/>
    <property type="match status" value="1"/>
</dbReference>
<sequence length="708" mass="81737">MATTAELFEEPFVADEYIERLVWRTPGGGSRGGPEAFDPKRLLEEFVNHIQELQIMDERIQRKVEKLEQQCQKEAKEFAKKVQELQKSNQVAFQHFQELDEHISYVATKVCHLGDQLEGVNTPRQRAVEAQKLMKYFNEFLDGELKSDVFTNPEKIKEAADVIQKLHLIAQELPFDRFSEVKSKIASKYHDLECQLIQEFTSAQRRGEVSRMREVAAVLLHFKGYSHCIDVYIKQCQEGAYLRNDIFEDAAILCQRVNKQVGDIFSNPEAVLAKLIQNVFEVKLQSFVKDQLEECRKSDAEQYLKSLYDLYTRTTSLSSKLMEFNLGTDKQTFLSKLIKSIFVSYLENYIEVEIGYLKSRSAMILQRYYDSKNHQKRSIGTGGIQDLKERIRQRTNLPLGPSIDTHGETFLSQEVVVNLLQETKQAFERCHRLSDPSDLPRNAFRIFTILVEFLCIEHIDYALETGLAGIPSSDSRNANLYFLDVVQQANTIFHLFDKQFNDHLMPLISSSPKLSECLQKKKEIIEQMEMKLDTGIDRTLNCMIGQMKHILAAEQKKTDFKPEDENNVLIQYTNACVKVCAYVRKQVEKIKNSMDGKNVDTVLMELGVRFHRLTYEHLQQYSYSCMGGMLAICDVAEYRKCAKDFKIPMVLHLFDTLHALCNLLVVAPDNLKQVCSGEQLANLDKNILHSFVQLRADYRSARLARHFS</sequence>
<organism>
    <name type="scientific">Rattus norvegicus</name>
    <name type="common">Rat</name>
    <dbReference type="NCBI Taxonomy" id="10116"/>
    <lineage>
        <taxon>Eukaryota</taxon>
        <taxon>Metazoa</taxon>
        <taxon>Chordata</taxon>
        <taxon>Craniata</taxon>
        <taxon>Vertebrata</taxon>
        <taxon>Euteleostomi</taxon>
        <taxon>Mammalia</taxon>
        <taxon>Eutheria</taxon>
        <taxon>Euarchontoglires</taxon>
        <taxon>Glires</taxon>
        <taxon>Rodentia</taxon>
        <taxon>Myomorpha</taxon>
        <taxon>Muroidea</taxon>
        <taxon>Muridae</taxon>
        <taxon>Murinae</taxon>
        <taxon>Rattus</taxon>
    </lineage>
</organism>
<evidence type="ECO:0000250" key="1">
    <source>
        <dbReference type="UniProtKB" id="O00471"/>
    </source>
</evidence>
<evidence type="ECO:0000250" key="2">
    <source>
        <dbReference type="UniProtKB" id="Q3TPX4"/>
    </source>
</evidence>
<evidence type="ECO:0000255" key="3"/>
<evidence type="ECO:0000269" key="4">
    <source>
    </source>
</evidence>
<evidence type="ECO:0000269" key="5">
    <source>
    </source>
</evidence>
<evidence type="ECO:0000305" key="6"/>
<evidence type="ECO:0007744" key="7">
    <source>
    </source>
</evidence>
<comment type="function">
    <text>Component of the exocyst complex involved in the docking of exocytic vesicles with fusion sites on the plasma membrane.</text>
</comment>
<comment type="subunit">
    <text evidence="2 5">The exocyst complex is composed of EXOC1, EXOC2, EXOC3, EXOC4, EXOC5, EXOC6, EXOC7 and EXOC8 (PubMed:9405631). Interacts with EXOC3L1 (By similarity).</text>
</comment>
<comment type="subcellular location">
    <subcellularLocation>
        <location evidence="1">Cytoplasm</location>
    </subcellularLocation>
    <subcellularLocation>
        <location evidence="1">Midbody</location>
    </subcellularLocation>
    <text evidence="1">Localization at the midbody requires the presence of RALA, EXOC2 and EXOC3.</text>
</comment>
<comment type="tissue specificity">
    <text evidence="4">Ubiquitous.</text>
</comment>
<comment type="similarity">
    <text evidence="6">Belongs to the SEC10 family.</text>
</comment>
<name>EXOC5_RAT</name>